<comment type="function">
    <text evidence="1">Catalyzes the isomerization between 2-isopropylmalate and 3-isopropylmalate, via the formation of 2-isopropylmaleate.</text>
</comment>
<comment type="catalytic activity">
    <reaction evidence="1">
        <text>(2R,3S)-3-isopropylmalate = (2S)-2-isopropylmalate</text>
        <dbReference type="Rhea" id="RHEA:32287"/>
        <dbReference type="ChEBI" id="CHEBI:1178"/>
        <dbReference type="ChEBI" id="CHEBI:35121"/>
        <dbReference type="EC" id="4.2.1.33"/>
    </reaction>
</comment>
<comment type="cofactor">
    <cofactor evidence="1">
        <name>[4Fe-4S] cluster</name>
        <dbReference type="ChEBI" id="CHEBI:49883"/>
    </cofactor>
    <text evidence="1">Binds 1 [4Fe-4S] cluster per subunit.</text>
</comment>
<comment type="pathway">
    <text evidence="1">Amino-acid biosynthesis; L-leucine biosynthesis; L-leucine from 3-methyl-2-oxobutanoate: step 2/4.</text>
</comment>
<comment type="subunit">
    <text evidence="1">Heterodimer of LeuC and LeuD.</text>
</comment>
<comment type="similarity">
    <text evidence="1">Belongs to the aconitase/IPM isomerase family. LeuC type 1 subfamily.</text>
</comment>
<protein>
    <recommendedName>
        <fullName evidence="1">3-isopropylmalate dehydratase large subunit</fullName>
        <ecNumber evidence="1">4.2.1.33</ecNumber>
    </recommendedName>
    <alternativeName>
        <fullName evidence="1">Alpha-IPM isomerase</fullName>
        <shortName evidence="1">IPMI</shortName>
    </alternativeName>
    <alternativeName>
        <fullName evidence="1">Isopropylmalate isomerase</fullName>
    </alternativeName>
</protein>
<proteinExistence type="inferred from homology"/>
<evidence type="ECO:0000255" key="1">
    <source>
        <dbReference type="HAMAP-Rule" id="MF_01026"/>
    </source>
</evidence>
<sequence length="469" mass="50775">MAQTLYDKLWNSHVVHTEEDGTALLYIDRQLLHEVTSPQAFEGLKLAQRPVWRISANLAVSDHNVPTTDRSHGIADPVSKLQVDTLDANCDAYGITQFKMNDVRQGIVHIIGPEQGATLPGMTIVCGDSHTSTHGAFGALAHGIGTSEVEHVLATQTLLQKKSKNMLVKVEGQLPRGCTAKDIVLAIIGQIGTAGGTGYAIEFGGSTIRALTMEGRMTVCNMAIEAGARAGMVAVDDTTVEYLKGRPFVPTGAEWDQAVEYWKTFRSDEGAQFDRVVELDAAQIVPQVTWGTSPEMVTSIDGRVPDPEREKDPVKRDAMERALAYMALAPNTPIEAIKVDKIFIGSCTNARIEDIRAAAYVVKKLNRRVAPNVRLAMVVPGSGLVKAQAEREGLDKVFTEAGFEWREPGCSMCLAMNADRLEPGERCASTSNRNFEGRQGQGGRTHLVSPAMAAAAAIEGHFVDIRRLG</sequence>
<keyword id="KW-0004">4Fe-4S</keyword>
<keyword id="KW-0028">Amino-acid biosynthesis</keyword>
<keyword id="KW-0100">Branched-chain amino acid biosynthesis</keyword>
<keyword id="KW-0408">Iron</keyword>
<keyword id="KW-0411">Iron-sulfur</keyword>
<keyword id="KW-0432">Leucine biosynthesis</keyword>
<keyword id="KW-0456">Lyase</keyword>
<keyword id="KW-0479">Metal-binding</keyword>
<feature type="chain" id="PRO_1000063536" description="3-isopropylmalate dehydratase large subunit">
    <location>
        <begin position="1"/>
        <end position="469"/>
    </location>
</feature>
<feature type="binding site" evidence="1">
    <location>
        <position position="347"/>
    </location>
    <ligand>
        <name>[4Fe-4S] cluster</name>
        <dbReference type="ChEBI" id="CHEBI:49883"/>
    </ligand>
</feature>
<feature type="binding site" evidence="1">
    <location>
        <position position="410"/>
    </location>
    <ligand>
        <name>[4Fe-4S] cluster</name>
        <dbReference type="ChEBI" id="CHEBI:49883"/>
    </ligand>
</feature>
<feature type="binding site" evidence="1">
    <location>
        <position position="413"/>
    </location>
    <ligand>
        <name>[4Fe-4S] cluster</name>
        <dbReference type="ChEBI" id="CHEBI:49883"/>
    </ligand>
</feature>
<dbReference type="EC" id="4.2.1.33" evidence="1"/>
<dbReference type="EMBL" id="CP000547">
    <property type="protein sequence ID" value="ABO02973.1"/>
    <property type="molecule type" value="Genomic_DNA"/>
</dbReference>
<dbReference type="RefSeq" id="WP_004187091.1">
    <property type="nucleotide sequence ID" value="NZ_CP007801.1"/>
</dbReference>
<dbReference type="SMR" id="A3MBT5"/>
<dbReference type="GeneID" id="92977643"/>
<dbReference type="KEGG" id="bmaz:BM44_3243"/>
<dbReference type="KEGG" id="bmn:BMA10247_A0520"/>
<dbReference type="PATRIC" id="fig|320389.8.peg.3640"/>
<dbReference type="UniPathway" id="UPA00048">
    <property type="reaction ID" value="UER00071"/>
</dbReference>
<dbReference type="GO" id="GO:0003861">
    <property type="term" value="F:3-isopropylmalate dehydratase activity"/>
    <property type="evidence" value="ECO:0007669"/>
    <property type="project" value="UniProtKB-UniRule"/>
</dbReference>
<dbReference type="GO" id="GO:0051539">
    <property type="term" value="F:4 iron, 4 sulfur cluster binding"/>
    <property type="evidence" value="ECO:0007669"/>
    <property type="project" value="UniProtKB-KW"/>
</dbReference>
<dbReference type="GO" id="GO:0046872">
    <property type="term" value="F:metal ion binding"/>
    <property type="evidence" value="ECO:0007669"/>
    <property type="project" value="UniProtKB-KW"/>
</dbReference>
<dbReference type="GO" id="GO:0009098">
    <property type="term" value="P:L-leucine biosynthetic process"/>
    <property type="evidence" value="ECO:0007669"/>
    <property type="project" value="UniProtKB-UniRule"/>
</dbReference>
<dbReference type="CDD" id="cd01583">
    <property type="entry name" value="IPMI"/>
    <property type="match status" value="1"/>
</dbReference>
<dbReference type="FunFam" id="3.30.499.10:FF:000007">
    <property type="entry name" value="3-isopropylmalate dehydratase large subunit"/>
    <property type="match status" value="1"/>
</dbReference>
<dbReference type="Gene3D" id="3.30.499.10">
    <property type="entry name" value="Aconitase, domain 3"/>
    <property type="match status" value="2"/>
</dbReference>
<dbReference type="HAMAP" id="MF_01026">
    <property type="entry name" value="LeuC_type1"/>
    <property type="match status" value="1"/>
</dbReference>
<dbReference type="InterPro" id="IPR004430">
    <property type="entry name" value="3-IsopropMal_deHydase_lsu"/>
</dbReference>
<dbReference type="InterPro" id="IPR015931">
    <property type="entry name" value="Acnase/IPM_dHydase_lsu_aba_1/3"/>
</dbReference>
<dbReference type="InterPro" id="IPR001030">
    <property type="entry name" value="Acoase/IPM_deHydtase_lsu_aba"/>
</dbReference>
<dbReference type="InterPro" id="IPR018136">
    <property type="entry name" value="Aconitase_4Fe-4S_BS"/>
</dbReference>
<dbReference type="InterPro" id="IPR036008">
    <property type="entry name" value="Aconitase_4Fe-4S_dom"/>
</dbReference>
<dbReference type="InterPro" id="IPR050067">
    <property type="entry name" value="IPM_dehydratase_rel_enz"/>
</dbReference>
<dbReference type="InterPro" id="IPR033941">
    <property type="entry name" value="IPMI_cat"/>
</dbReference>
<dbReference type="NCBIfam" id="TIGR00170">
    <property type="entry name" value="leuC"/>
    <property type="match status" value="1"/>
</dbReference>
<dbReference type="NCBIfam" id="NF004016">
    <property type="entry name" value="PRK05478.1"/>
    <property type="match status" value="1"/>
</dbReference>
<dbReference type="NCBIfam" id="NF009116">
    <property type="entry name" value="PRK12466.1"/>
    <property type="match status" value="1"/>
</dbReference>
<dbReference type="PANTHER" id="PTHR43822:SF9">
    <property type="entry name" value="3-ISOPROPYLMALATE DEHYDRATASE"/>
    <property type="match status" value="1"/>
</dbReference>
<dbReference type="PANTHER" id="PTHR43822">
    <property type="entry name" value="HOMOACONITASE, MITOCHONDRIAL-RELATED"/>
    <property type="match status" value="1"/>
</dbReference>
<dbReference type="Pfam" id="PF00330">
    <property type="entry name" value="Aconitase"/>
    <property type="match status" value="1"/>
</dbReference>
<dbReference type="PRINTS" id="PR00415">
    <property type="entry name" value="ACONITASE"/>
</dbReference>
<dbReference type="SUPFAM" id="SSF53732">
    <property type="entry name" value="Aconitase iron-sulfur domain"/>
    <property type="match status" value="1"/>
</dbReference>
<dbReference type="PROSITE" id="PS00450">
    <property type="entry name" value="ACONITASE_1"/>
    <property type="match status" value="1"/>
</dbReference>
<dbReference type="PROSITE" id="PS01244">
    <property type="entry name" value="ACONITASE_2"/>
    <property type="match status" value="1"/>
</dbReference>
<reference key="1">
    <citation type="journal article" date="2010" name="Genome Biol. Evol.">
        <title>Continuing evolution of Burkholderia mallei through genome reduction and large-scale rearrangements.</title>
        <authorList>
            <person name="Losada L."/>
            <person name="Ronning C.M."/>
            <person name="DeShazer D."/>
            <person name="Woods D."/>
            <person name="Fedorova N."/>
            <person name="Kim H.S."/>
            <person name="Shabalina S.A."/>
            <person name="Pearson T.R."/>
            <person name="Brinkac L."/>
            <person name="Tan P."/>
            <person name="Nandi T."/>
            <person name="Crabtree J."/>
            <person name="Badger J."/>
            <person name="Beckstrom-Sternberg S."/>
            <person name="Saqib M."/>
            <person name="Schutzer S.E."/>
            <person name="Keim P."/>
            <person name="Nierman W.C."/>
        </authorList>
    </citation>
    <scope>NUCLEOTIDE SEQUENCE [LARGE SCALE GENOMIC DNA]</scope>
    <source>
        <strain>NCTC 10247</strain>
    </source>
</reference>
<organism>
    <name type="scientific">Burkholderia mallei (strain NCTC 10247)</name>
    <dbReference type="NCBI Taxonomy" id="320389"/>
    <lineage>
        <taxon>Bacteria</taxon>
        <taxon>Pseudomonadati</taxon>
        <taxon>Pseudomonadota</taxon>
        <taxon>Betaproteobacteria</taxon>
        <taxon>Burkholderiales</taxon>
        <taxon>Burkholderiaceae</taxon>
        <taxon>Burkholderia</taxon>
        <taxon>pseudomallei group</taxon>
    </lineage>
</organism>
<name>LEUC_BURM7</name>
<gene>
    <name evidence="1" type="primary">leuC</name>
    <name type="ordered locus">BMA10247_A0520</name>
</gene>
<accession>A3MBT5</accession>